<reference key="1">
    <citation type="journal article" date="1999" name="Nature">
        <title>Sequence and analysis of chromosome 4 of the plant Arabidopsis thaliana.</title>
        <authorList>
            <person name="Mayer K.F.X."/>
            <person name="Schueller C."/>
            <person name="Wambutt R."/>
            <person name="Murphy G."/>
            <person name="Volckaert G."/>
            <person name="Pohl T."/>
            <person name="Duesterhoeft A."/>
            <person name="Stiekema W."/>
            <person name="Entian K.-D."/>
            <person name="Terryn N."/>
            <person name="Harris B."/>
            <person name="Ansorge W."/>
            <person name="Brandt P."/>
            <person name="Grivell L.A."/>
            <person name="Rieger M."/>
            <person name="Weichselgartner M."/>
            <person name="de Simone V."/>
            <person name="Obermaier B."/>
            <person name="Mache R."/>
            <person name="Mueller M."/>
            <person name="Kreis M."/>
            <person name="Delseny M."/>
            <person name="Puigdomenech P."/>
            <person name="Watson M."/>
            <person name="Schmidtheini T."/>
            <person name="Reichert B."/>
            <person name="Portetelle D."/>
            <person name="Perez-Alonso M."/>
            <person name="Boutry M."/>
            <person name="Bancroft I."/>
            <person name="Vos P."/>
            <person name="Hoheisel J."/>
            <person name="Zimmermann W."/>
            <person name="Wedler H."/>
            <person name="Ridley P."/>
            <person name="Langham S.-A."/>
            <person name="McCullagh B."/>
            <person name="Bilham L."/>
            <person name="Robben J."/>
            <person name="van der Schueren J."/>
            <person name="Grymonprez B."/>
            <person name="Chuang Y.-J."/>
            <person name="Vandenbussche F."/>
            <person name="Braeken M."/>
            <person name="Weltjens I."/>
            <person name="Voet M."/>
            <person name="Bastiaens I."/>
            <person name="Aert R."/>
            <person name="Defoor E."/>
            <person name="Weitzenegger T."/>
            <person name="Bothe G."/>
            <person name="Ramsperger U."/>
            <person name="Hilbert H."/>
            <person name="Braun M."/>
            <person name="Holzer E."/>
            <person name="Brandt A."/>
            <person name="Peters S."/>
            <person name="van Staveren M."/>
            <person name="Dirkse W."/>
            <person name="Mooijman P."/>
            <person name="Klein Lankhorst R."/>
            <person name="Rose M."/>
            <person name="Hauf J."/>
            <person name="Koetter P."/>
            <person name="Berneiser S."/>
            <person name="Hempel S."/>
            <person name="Feldpausch M."/>
            <person name="Lamberth S."/>
            <person name="Van den Daele H."/>
            <person name="De Keyser A."/>
            <person name="Buysshaert C."/>
            <person name="Gielen J."/>
            <person name="Villarroel R."/>
            <person name="De Clercq R."/>
            <person name="van Montagu M."/>
            <person name="Rogers J."/>
            <person name="Cronin A."/>
            <person name="Quail M.A."/>
            <person name="Bray-Allen S."/>
            <person name="Clark L."/>
            <person name="Doggett J."/>
            <person name="Hall S."/>
            <person name="Kay M."/>
            <person name="Lennard N."/>
            <person name="McLay K."/>
            <person name="Mayes R."/>
            <person name="Pettett A."/>
            <person name="Rajandream M.A."/>
            <person name="Lyne M."/>
            <person name="Benes V."/>
            <person name="Rechmann S."/>
            <person name="Borkova D."/>
            <person name="Bloecker H."/>
            <person name="Scharfe M."/>
            <person name="Grimm M."/>
            <person name="Loehnert T.-H."/>
            <person name="Dose S."/>
            <person name="de Haan M."/>
            <person name="Maarse A.C."/>
            <person name="Schaefer M."/>
            <person name="Mueller-Auer S."/>
            <person name="Gabel C."/>
            <person name="Fuchs M."/>
            <person name="Fartmann B."/>
            <person name="Granderath K."/>
            <person name="Dauner D."/>
            <person name="Herzl A."/>
            <person name="Neumann S."/>
            <person name="Argiriou A."/>
            <person name="Vitale D."/>
            <person name="Liguori R."/>
            <person name="Piravandi E."/>
            <person name="Massenet O."/>
            <person name="Quigley F."/>
            <person name="Clabauld G."/>
            <person name="Muendlein A."/>
            <person name="Felber R."/>
            <person name="Schnabl S."/>
            <person name="Hiller R."/>
            <person name="Schmidt W."/>
            <person name="Lecharny A."/>
            <person name="Aubourg S."/>
            <person name="Chefdor F."/>
            <person name="Cooke R."/>
            <person name="Berger C."/>
            <person name="Monfort A."/>
            <person name="Casacuberta E."/>
            <person name="Gibbons T."/>
            <person name="Weber N."/>
            <person name="Vandenbol M."/>
            <person name="Bargues M."/>
            <person name="Terol J."/>
            <person name="Torres A."/>
            <person name="Perez-Perez A."/>
            <person name="Purnelle B."/>
            <person name="Bent E."/>
            <person name="Johnson S."/>
            <person name="Tacon D."/>
            <person name="Jesse T."/>
            <person name="Heijnen L."/>
            <person name="Schwarz S."/>
            <person name="Scholler P."/>
            <person name="Heber S."/>
            <person name="Francs P."/>
            <person name="Bielke C."/>
            <person name="Frishman D."/>
            <person name="Haase D."/>
            <person name="Lemcke K."/>
            <person name="Mewes H.-W."/>
            <person name="Stocker S."/>
            <person name="Zaccaria P."/>
            <person name="Bevan M."/>
            <person name="Wilson R.K."/>
            <person name="de la Bastide M."/>
            <person name="Habermann K."/>
            <person name="Parnell L."/>
            <person name="Dedhia N."/>
            <person name="Gnoj L."/>
            <person name="Schutz K."/>
            <person name="Huang E."/>
            <person name="Spiegel L."/>
            <person name="Sekhon M."/>
            <person name="Murray J."/>
            <person name="Sheet P."/>
            <person name="Cordes M."/>
            <person name="Abu-Threideh J."/>
            <person name="Stoneking T."/>
            <person name="Kalicki J."/>
            <person name="Graves T."/>
            <person name="Harmon G."/>
            <person name="Edwards J."/>
            <person name="Latreille P."/>
            <person name="Courtney L."/>
            <person name="Cloud J."/>
            <person name="Abbott A."/>
            <person name="Scott K."/>
            <person name="Johnson D."/>
            <person name="Minx P."/>
            <person name="Bentley D."/>
            <person name="Fulton B."/>
            <person name="Miller N."/>
            <person name="Greco T."/>
            <person name="Kemp K."/>
            <person name="Kramer J."/>
            <person name="Fulton L."/>
            <person name="Mardis E."/>
            <person name="Dante M."/>
            <person name="Pepin K."/>
            <person name="Hillier L.W."/>
            <person name="Nelson J."/>
            <person name="Spieth J."/>
            <person name="Ryan E."/>
            <person name="Andrews S."/>
            <person name="Geisel C."/>
            <person name="Layman D."/>
            <person name="Du H."/>
            <person name="Ali J."/>
            <person name="Berghoff A."/>
            <person name="Jones K."/>
            <person name="Drone K."/>
            <person name="Cotton M."/>
            <person name="Joshu C."/>
            <person name="Antonoiu B."/>
            <person name="Zidanic M."/>
            <person name="Strong C."/>
            <person name="Sun H."/>
            <person name="Lamar B."/>
            <person name="Yordan C."/>
            <person name="Ma P."/>
            <person name="Zhong J."/>
            <person name="Preston R."/>
            <person name="Vil D."/>
            <person name="Shekher M."/>
            <person name="Matero A."/>
            <person name="Shah R."/>
            <person name="Swaby I.K."/>
            <person name="O'Shaughnessy A."/>
            <person name="Rodriguez M."/>
            <person name="Hoffman J."/>
            <person name="Till S."/>
            <person name="Granat S."/>
            <person name="Shohdy N."/>
            <person name="Hasegawa A."/>
            <person name="Hameed A."/>
            <person name="Lodhi M."/>
            <person name="Johnson A."/>
            <person name="Chen E."/>
            <person name="Marra M.A."/>
            <person name="Martienssen R."/>
            <person name="McCombie W.R."/>
        </authorList>
    </citation>
    <scope>NUCLEOTIDE SEQUENCE [LARGE SCALE GENOMIC DNA]</scope>
    <source>
        <strain>cv. Columbia</strain>
    </source>
</reference>
<reference key="2">
    <citation type="journal article" date="2017" name="Plant J.">
        <title>Araport11: a complete reannotation of the Arabidopsis thaliana reference genome.</title>
        <authorList>
            <person name="Cheng C.Y."/>
            <person name="Krishnakumar V."/>
            <person name="Chan A.P."/>
            <person name="Thibaud-Nissen F."/>
            <person name="Schobel S."/>
            <person name="Town C.D."/>
        </authorList>
    </citation>
    <scope>GENOME REANNOTATION</scope>
    <source>
        <strain>cv. Columbia</strain>
    </source>
</reference>
<reference key="3">
    <citation type="journal article" date="2007" name="Physiol. Plantarum">
        <title>Arabidopsis prolyl 4-hydroxylases are differentially expressed in response to hypoxia, anoxia and mechanical wounding.</title>
        <authorList>
            <person name="Vlad F."/>
            <person name="Spano T."/>
            <person name="Vlad D."/>
            <person name="Bou Daher F."/>
            <person name="Ouelhadj A."/>
            <person name="Kalaitzis P."/>
        </authorList>
    </citation>
    <scope>GENE FAMILY</scope>
    <scope>NOMENCLATURE</scope>
</reference>
<gene>
    <name evidence="6" type="primary">P4H11</name>
    <name type="ordered locus">At4g35820</name>
    <name type="ORF">F4B14.90</name>
</gene>
<organism>
    <name type="scientific">Arabidopsis thaliana</name>
    <name type="common">Mouse-ear cress</name>
    <dbReference type="NCBI Taxonomy" id="3702"/>
    <lineage>
        <taxon>Eukaryota</taxon>
        <taxon>Viridiplantae</taxon>
        <taxon>Streptophyta</taxon>
        <taxon>Embryophyta</taxon>
        <taxon>Tracheophyta</taxon>
        <taxon>Spermatophyta</taxon>
        <taxon>Magnoliopsida</taxon>
        <taxon>eudicotyledons</taxon>
        <taxon>Gunneridae</taxon>
        <taxon>Pentapetalae</taxon>
        <taxon>rosids</taxon>
        <taxon>malvids</taxon>
        <taxon>Brassicales</taxon>
        <taxon>Brassicaceae</taxon>
        <taxon>Camelineae</taxon>
        <taxon>Arabidopsis</taxon>
    </lineage>
</organism>
<evidence type="ECO:0000250" key="1">
    <source>
        <dbReference type="UniProtKB" id="Q24JN5"/>
    </source>
</evidence>
<evidence type="ECO:0000250" key="2">
    <source>
        <dbReference type="UniProtKB" id="Q86KR9"/>
    </source>
</evidence>
<evidence type="ECO:0000250" key="3">
    <source>
        <dbReference type="UniProtKB" id="Q9ZW86"/>
    </source>
</evidence>
<evidence type="ECO:0000255" key="4"/>
<evidence type="ECO:0000255" key="5">
    <source>
        <dbReference type="PROSITE-ProRule" id="PRU00805"/>
    </source>
</evidence>
<evidence type="ECO:0000303" key="6">
    <source ref="3"/>
</evidence>
<evidence type="ECO:0000305" key="7"/>
<accession>Q9SZT0</accession>
<comment type="function">
    <text evidence="3">Catalyzes the post-translational formation of 4-hydroxyproline in -Xaa-Pro-Gly- sequences in proline-rich peptide sequences of plant glycoproteins and other proteins. Hydroxyprolines are important constituent of many plant cell wall glycoproteins such as extensins, hydroxyproline-rich glycoproteins, lectins and arabinogalactan proteins.</text>
</comment>
<comment type="catalytic activity">
    <reaction evidence="3">
        <text>L-prolyl-[collagen] + 2-oxoglutarate + O2 = trans-4-hydroxy-L-prolyl-[collagen] + succinate + CO2</text>
        <dbReference type="Rhea" id="RHEA:18945"/>
        <dbReference type="Rhea" id="RHEA-COMP:11676"/>
        <dbReference type="Rhea" id="RHEA-COMP:11680"/>
        <dbReference type="ChEBI" id="CHEBI:15379"/>
        <dbReference type="ChEBI" id="CHEBI:16526"/>
        <dbReference type="ChEBI" id="CHEBI:16810"/>
        <dbReference type="ChEBI" id="CHEBI:30031"/>
        <dbReference type="ChEBI" id="CHEBI:50342"/>
        <dbReference type="ChEBI" id="CHEBI:61965"/>
        <dbReference type="EC" id="1.14.11.2"/>
    </reaction>
</comment>
<comment type="cofactor">
    <cofactor evidence="5">
        <name>Fe(2+)</name>
        <dbReference type="ChEBI" id="CHEBI:29033"/>
    </cofactor>
    <text evidence="5">Binds 1 Fe(2+) ion per subunit.</text>
</comment>
<comment type="cofactor">
    <cofactor evidence="2">
        <name>L-ascorbate</name>
        <dbReference type="ChEBI" id="CHEBI:38290"/>
    </cofactor>
</comment>
<comment type="subcellular location">
    <subcellularLocation>
        <location evidence="1">Endoplasmic reticulum membrane</location>
        <topology evidence="1">Single-pass type II membrane protein</topology>
    </subcellularLocation>
</comment>
<comment type="similarity">
    <text evidence="7">Belongs to the P4HA family.</text>
</comment>
<feature type="chain" id="PRO_0000429344" description="Probable prolyl 4-hydroxylase 11">
    <location>
        <begin position="1"/>
        <end position="272"/>
    </location>
</feature>
<feature type="topological domain" description="Cytoplasmic" evidence="7">
    <location>
        <begin position="1"/>
        <end position="55"/>
    </location>
</feature>
<feature type="transmembrane region" description="Helical; Signal-anchor for type II membrane protein" evidence="4">
    <location>
        <begin position="56"/>
        <end position="80"/>
    </location>
</feature>
<feature type="topological domain" description="Lumenal" evidence="7">
    <location>
        <begin position="81"/>
        <end position="272"/>
    </location>
</feature>
<feature type="domain" description="Fe2OG dioxygenase" evidence="5">
    <location>
        <begin position="179"/>
        <end position="272"/>
    </location>
</feature>
<feature type="binding site" evidence="5">
    <location>
        <position position="197"/>
    </location>
    <ligand>
        <name>Fe cation</name>
        <dbReference type="ChEBI" id="CHEBI:24875"/>
    </ligand>
</feature>
<feature type="binding site" evidence="5">
    <location>
        <position position="199"/>
    </location>
    <ligand>
        <name>Fe cation</name>
        <dbReference type="ChEBI" id="CHEBI:24875"/>
    </ligand>
</feature>
<feature type="binding site" evidence="5">
    <location>
        <position position="261"/>
    </location>
    <ligand>
        <name>Fe cation</name>
        <dbReference type="ChEBI" id="CHEBI:24875"/>
    </ligand>
</feature>
<proteinExistence type="inferred from homology"/>
<name>P4H11_ARATH</name>
<protein>
    <recommendedName>
        <fullName evidence="7">Probable prolyl 4-hydroxylase 11</fullName>
        <shortName evidence="6">AtP4H11</shortName>
        <ecNumber evidence="7">1.14.11.2</ecNumber>
    </recommendedName>
</protein>
<keyword id="KW-0223">Dioxygenase</keyword>
<keyword id="KW-0256">Endoplasmic reticulum</keyword>
<keyword id="KW-0408">Iron</keyword>
<keyword id="KW-0472">Membrane</keyword>
<keyword id="KW-0479">Metal-binding</keyword>
<keyword id="KW-0560">Oxidoreductase</keyword>
<keyword id="KW-1185">Reference proteome</keyword>
<keyword id="KW-0735">Signal-anchor</keyword>
<keyword id="KW-0812">Transmembrane</keyword>
<keyword id="KW-1133">Transmembrane helix</keyword>
<dbReference type="EC" id="1.14.11.2" evidence="7"/>
<dbReference type="EMBL" id="AL031986">
    <property type="protein sequence ID" value="CAA21468.1"/>
    <property type="molecule type" value="Genomic_DNA"/>
</dbReference>
<dbReference type="EMBL" id="AL161588">
    <property type="protein sequence ID" value="CAB81491.1"/>
    <property type="molecule type" value="Genomic_DNA"/>
</dbReference>
<dbReference type="EMBL" id="CP002687">
    <property type="protein sequence ID" value="AEE86575.1"/>
    <property type="molecule type" value="Genomic_DNA"/>
</dbReference>
<dbReference type="PIR" id="T04692">
    <property type="entry name" value="T04692"/>
</dbReference>
<dbReference type="RefSeq" id="NP_195307.1">
    <property type="nucleotide sequence ID" value="NM_119748.1"/>
</dbReference>
<dbReference type="SMR" id="Q9SZT0"/>
<dbReference type="FunCoup" id="Q9SZT0">
    <property type="interactions" value="10"/>
</dbReference>
<dbReference type="STRING" id="3702.Q9SZT0"/>
<dbReference type="PaxDb" id="3702-AT4G35820.1"/>
<dbReference type="EnsemblPlants" id="AT4G35820.1">
    <property type="protein sequence ID" value="AT4G35820.1"/>
    <property type="gene ID" value="AT4G35820"/>
</dbReference>
<dbReference type="GeneID" id="829736"/>
<dbReference type="Gramene" id="AT4G35820.1">
    <property type="protein sequence ID" value="AT4G35820.1"/>
    <property type="gene ID" value="AT4G35820"/>
</dbReference>
<dbReference type="KEGG" id="ath:AT4G35820"/>
<dbReference type="Araport" id="AT4G35820"/>
<dbReference type="TAIR" id="AT4G35820"/>
<dbReference type="eggNOG" id="KOG1591">
    <property type="taxonomic scope" value="Eukaryota"/>
</dbReference>
<dbReference type="HOGENOM" id="CLU_099206_0_0_1"/>
<dbReference type="InParanoid" id="Q9SZT0"/>
<dbReference type="OMA" id="NANAMHA"/>
<dbReference type="PhylomeDB" id="Q9SZT0"/>
<dbReference type="BioCyc" id="ARA:AT4G35820-MONOMER"/>
<dbReference type="PRO" id="PR:Q9SZT0"/>
<dbReference type="Proteomes" id="UP000006548">
    <property type="component" value="Chromosome 4"/>
</dbReference>
<dbReference type="ExpressionAtlas" id="Q9SZT0">
    <property type="expression patterns" value="baseline and differential"/>
</dbReference>
<dbReference type="GO" id="GO:0005789">
    <property type="term" value="C:endoplasmic reticulum membrane"/>
    <property type="evidence" value="ECO:0007669"/>
    <property type="project" value="UniProtKB-SubCell"/>
</dbReference>
<dbReference type="GO" id="GO:0005506">
    <property type="term" value="F:iron ion binding"/>
    <property type="evidence" value="ECO:0007669"/>
    <property type="project" value="InterPro"/>
</dbReference>
<dbReference type="GO" id="GO:0031418">
    <property type="term" value="F:L-ascorbic acid binding"/>
    <property type="evidence" value="ECO:0007669"/>
    <property type="project" value="InterPro"/>
</dbReference>
<dbReference type="GO" id="GO:0004656">
    <property type="term" value="F:procollagen-proline 4-dioxygenase activity"/>
    <property type="evidence" value="ECO:0007669"/>
    <property type="project" value="UniProtKB-EC"/>
</dbReference>
<dbReference type="FunFam" id="2.60.120.620:FF:000030">
    <property type="entry name" value="Proline HYdroxylase"/>
    <property type="match status" value="1"/>
</dbReference>
<dbReference type="Gene3D" id="2.60.120.620">
    <property type="entry name" value="q2cbj1_9rhob like domain"/>
    <property type="match status" value="1"/>
</dbReference>
<dbReference type="InterPro" id="IPR005123">
    <property type="entry name" value="Oxoglu/Fe-dep_dioxygenase_dom"/>
</dbReference>
<dbReference type="InterPro" id="IPR045054">
    <property type="entry name" value="P4HA-like"/>
</dbReference>
<dbReference type="InterPro" id="IPR006620">
    <property type="entry name" value="Pro_4_hyd_alph"/>
</dbReference>
<dbReference type="InterPro" id="IPR044862">
    <property type="entry name" value="Pro_4_hyd_alph_FE2OG_OXY"/>
</dbReference>
<dbReference type="PANTHER" id="PTHR10869:SF160">
    <property type="entry name" value="PROLYL 4-HYDROXYLASE 11-RELATED"/>
    <property type="match status" value="1"/>
</dbReference>
<dbReference type="PANTHER" id="PTHR10869">
    <property type="entry name" value="PROLYL 4-HYDROXYLASE ALPHA SUBUNIT"/>
    <property type="match status" value="1"/>
</dbReference>
<dbReference type="Pfam" id="PF13640">
    <property type="entry name" value="2OG-FeII_Oxy_3"/>
    <property type="match status" value="1"/>
</dbReference>
<dbReference type="Pfam" id="PF14223">
    <property type="entry name" value="Retrotran_gag_2"/>
    <property type="match status" value="1"/>
</dbReference>
<dbReference type="SMART" id="SM00702">
    <property type="entry name" value="P4Hc"/>
    <property type="match status" value="1"/>
</dbReference>
<dbReference type="PROSITE" id="PS51471">
    <property type="entry name" value="FE2OG_OXY"/>
    <property type="match status" value="1"/>
</dbReference>
<sequence>MSKSTSVSTILYLRQRLQGLKIYETSDLIQHINTFDELVGEQVSVDVKIEEKTKDMILLCSLSPLLTTLTCSMVKVAASLRFPNERWLEVITKEPRAFVYHNFLALFFKICKTNEECDHLISLAKPSMARSKVRNALTGLGEESSSRTSSGTFIRSGHDKIVKEIEKRISEFTFIPQENGETLQVINYEVGQKFEPHFDGFQRIATVLMYLSDVDKGGETVFPEAKGIKSKKGVSVRPKKGDALLFWSMRPDGSRDPSSKHGKRHCLSLNLF</sequence>